<gene>
    <name evidence="1" type="primary">rpmC</name>
    <name type="ordered locus">Rmag_0173</name>
</gene>
<evidence type="ECO:0000255" key="1">
    <source>
        <dbReference type="HAMAP-Rule" id="MF_00374"/>
    </source>
</evidence>
<evidence type="ECO:0000305" key="2"/>
<comment type="similarity">
    <text evidence="1">Belongs to the universal ribosomal protein uL29 family.</text>
</comment>
<proteinExistence type="inferred from homology"/>
<protein>
    <recommendedName>
        <fullName evidence="1">Large ribosomal subunit protein uL29</fullName>
    </recommendedName>
    <alternativeName>
        <fullName evidence="2">50S ribosomal protein L29</fullName>
    </alternativeName>
</protein>
<dbReference type="EMBL" id="CP000488">
    <property type="protein sequence ID" value="ABL01965.1"/>
    <property type="molecule type" value="Genomic_DNA"/>
</dbReference>
<dbReference type="RefSeq" id="WP_011737591.1">
    <property type="nucleotide sequence ID" value="NC_008610.1"/>
</dbReference>
<dbReference type="SMR" id="A1AVK8"/>
<dbReference type="STRING" id="413404.Rmag_0173"/>
<dbReference type="KEGG" id="rma:Rmag_0173"/>
<dbReference type="eggNOG" id="COG0255">
    <property type="taxonomic scope" value="Bacteria"/>
</dbReference>
<dbReference type="HOGENOM" id="CLU_158491_1_1_6"/>
<dbReference type="OrthoDB" id="9815192at2"/>
<dbReference type="Proteomes" id="UP000002587">
    <property type="component" value="Chromosome"/>
</dbReference>
<dbReference type="GO" id="GO:1990904">
    <property type="term" value="C:ribonucleoprotein complex"/>
    <property type="evidence" value="ECO:0007669"/>
    <property type="project" value="UniProtKB-KW"/>
</dbReference>
<dbReference type="GO" id="GO:0005840">
    <property type="term" value="C:ribosome"/>
    <property type="evidence" value="ECO:0007669"/>
    <property type="project" value="UniProtKB-KW"/>
</dbReference>
<dbReference type="GO" id="GO:0003735">
    <property type="term" value="F:structural constituent of ribosome"/>
    <property type="evidence" value="ECO:0007669"/>
    <property type="project" value="InterPro"/>
</dbReference>
<dbReference type="GO" id="GO:0006412">
    <property type="term" value="P:translation"/>
    <property type="evidence" value="ECO:0007669"/>
    <property type="project" value="UniProtKB-UniRule"/>
</dbReference>
<dbReference type="CDD" id="cd00427">
    <property type="entry name" value="Ribosomal_L29_HIP"/>
    <property type="match status" value="1"/>
</dbReference>
<dbReference type="Gene3D" id="1.10.287.310">
    <property type="match status" value="1"/>
</dbReference>
<dbReference type="HAMAP" id="MF_00374">
    <property type="entry name" value="Ribosomal_uL29"/>
    <property type="match status" value="1"/>
</dbReference>
<dbReference type="InterPro" id="IPR001854">
    <property type="entry name" value="Ribosomal_uL29"/>
</dbReference>
<dbReference type="InterPro" id="IPR036049">
    <property type="entry name" value="Ribosomal_uL29_sf"/>
</dbReference>
<dbReference type="NCBIfam" id="TIGR00012">
    <property type="entry name" value="L29"/>
    <property type="match status" value="1"/>
</dbReference>
<dbReference type="Pfam" id="PF00831">
    <property type="entry name" value="Ribosomal_L29"/>
    <property type="match status" value="1"/>
</dbReference>
<dbReference type="SUPFAM" id="SSF46561">
    <property type="entry name" value="Ribosomal protein L29 (L29p)"/>
    <property type="match status" value="1"/>
</dbReference>
<sequence>MNVKELRNQDVSTLNETLIKLLKKHFELRMQHKSAQLDDASKLGKTKRSIAQVKTIIRQKQV</sequence>
<accession>A1AVK8</accession>
<keyword id="KW-0687">Ribonucleoprotein</keyword>
<keyword id="KW-0689">Ribosomal protein</keyword>
<reference key="1">
    <citation type="journal article" date="2007" name="Science">
        <title>The Calyptogena magnifica chemoautotrophic symbiont genome.</title>
        <authorList>
            <person name="Newton I.L.G."/>
            <person name="Woyke T."/>
            <person name="Auchtung T.A."/>
            <person name="Dilly G.F."/>
            <person name="Dutton R.J."/>
            <person name="Fisher M.C."/>
            <person name="Fontanez K.M."/>
            <person name="Lau E."/>
            <person name="Stewart F.J."/>
            <person name="Richardson P.M."/>
            <person name="Barry K.W."/>
            <person name="Saunders E."/>
            <person name="Detter J.C."/>
            <person name="Wu D."/>
            <person name="Eisen J.A."/>
            <person name="Cavanaugh C.M."/>
        </authorList>
    </citation>
    <scope>NUCLEOTIDE SEQUENCE [LARGE SCALE GENOMIC DNA]</scope>
</reference>
<feature type="chain" id="PRO_1000007593" description="Large ribosomal subunit protein uL29">
    <location>
        <begin position="1"/>
        <end position="62"/>
    </location>
</feature>
<organism>
    <name type="scientific">Ruthia magnifica subsp. Calyptogena magnifica</name>
    <dbReference type="NCBI Taxonomy" id="413404"/>
    <lineage>
        <taxon>Bacteria</taxon>
        <taxon>Pseudomonadati</taxon>
        <taxon>Pseudomonadota</taxon>
        <taxon>Gammaproteobacteria</taxon>
        <taxon>Candidatus Pseudothioglobaceae</taxon>
        <taxon>Candidatus Ruthturnera</taxon>
    </lineage>
</organism>
<name>RL29_RUTMC</name>